<organism>
    <name type="scientific">Acaryochloris marina (strain MBIC 11017)</name>
    <dbReference type="NCBI Taxonomy" id="329726"/>
    <lineage>
        <taxon>Bacteria</taxon>
        <taxon>Bacillati</taxon>
        <taxon>Cyanobacteriota</taxon>
        <taxon>Cyanophyceae</taxon>
        <taxon>Acaryochloridales</taxon>
        <taxon>Acaryochloridaceae</taxon>
        <taxon>Acaryochloris</taxon>
    </lineage>
</organism>
<keyword id="KW-0004">4Fe-4S</keyword>
<keyword id="KW-0067">ATP-binding</keyword>
<keyword id="KW-0149">Chlorophyll biosynthesis</keyword>
<keyword id="KW-0408">Iron</keyword>
<keyword id="KW-0411">Iron-sulfur</keyword>
<keyword id="KW-0479">Metal-binding</keyword>
<keyword id="KW-0547">Nucleotide-binding</keyword>
<keyword id="KW-0560">Oxidoreductase</keyword>
<keyword id="KW-0602">Photosynthesis</keyword>
<keyword id="KW-1185">Reference proteome</keyword>
<name>CHLB_ACAM1</name>
<gene>
    <name evidence="1" type="primary">chlB</name>
    <name type="ordered locus">AM1_1539</name>
</gene>
<dbReference type="EC" id="1.3.7.7" evidence="1"/>
<dbReference type="EMBL" id="CP000828">
    <property type="protein sequence ID" value="ABW26564.1"/>
    <property type="molecule type" value="Genomic_DNA"/>
</dbReference>
<dbReference type="RefSeq" id="WP_012162088.1">
    <property type="nucleotide sequence ID" value="NC_009925.1"/>
</dbReference>
<dbReference type="SMR" id="B0C929"/>
<dbReference type="STRING" id="329726.AM1_1539"/>
<dbReference type="KEGG" id="amr:AM1_1539"/>
<dbReference type="eggNOG" id="COG2710">
    <property type="taxonomic scope" value="Bacteria"/>
</dbReference>
<dbReference type="HOGENOM" id="CLU_025470_0_0_3"/>
<dbReference type="OrthoDB" id="5717231at2"/>
<dbReference type="UniPathway" id="UPA00670"/>
<dbReference type="Proteomes" id="UP000000268">
    <property type="component" value="Chromosome"/>
</dbReference>
<dbReference type="GO" id="GO:0051539">
    <property type="term" value="F:4 iron, 4 sulfur cluster binding"/>
    <property type="evidence" value="ECO:0007669"/>
    <property type="project" value="UniProtKB-UniRule"/>
</dbReference>
<dbReference type="GO" id="GO:0005524">
    <property type="term" value="F:ATP binding"/>
    <property type="evidence" value="ECO:0007669"/>
    <property type="project" value="UniProtKB-UniRule"/>
</dbReference>
<dbReference type="GO" id="GO:0046872">
    <property type="term" value="F:metal ion binding"/>
    <property type="evidence" value="ECO:0007669"/>
    <property type="project" value="UniProtKB-KW"/>
</dbReference>
<dbReference type="GO" id="GO:0016730">
    <property type="term" value="F:oxidoreductase activity, acting on iron-sulfur proteins as donors"/>
    <property type="evidence" value="ECO:0007669"/>
    <property type="project" value="InterPro"/>
</dbReference>
<dbReference type="GO" id="GO:0016636">
    <property type="term" value="F:oxidoreductase activity, acting on the CH-CH group of donors, iron-sulfur protein as acceptor"/>
    <property type="evidence" value="ECO:0007669"/>
    <property type="project" value="UniProtKB-UniRule"/>
</dbReference>
<dbReference type="GO" id="GO:0036068">
    <property type="term" value="P:light-independent chlorophyll biosynthetic process"/>
    <property type="evidence" value="ECO:0007669"/>
    <property type="project" value="UniProtKB-UniRule"/>
</dbReference>
<dbReference type="GO" id="GO:0019685">
    <property type="term" value="P:photosynthesis, dark reaction"/>
    <property type="evidence" value="ECO:0007669"/>
    <property type="project" value="InterPro"/>
</dbReference>
<dbReference type="CDD" id="cd01981">
    <property type="entry name" value="Pchlide_reductase_B"/>
    <property type="match status" value="1"/>
</dbReference>
<dbReference type="Gene3D" id="1.20.89.20">
    <property type="match status" value="1"/>
</dbReference>
<dbReference type="Gene3D" id="3.40.50.1980">
    <property type="entry name" value="Nitrogenase molybdenum iron protein domain"/>
    <property type="match status" value="3"/>
</dbReference>
<dbReference type="Gene3D" id="1.10.8.550">
    <property type="entry name" value="Proto-chlorophyllide reductase 57 kD subunit B"/>
    <property type="match status" value="1"/>
</dbReference>
<dbReference type="HAMAP" id="MF_00353">
    <property type="entry name" value="ChlB_BchB"/>
    <property type="match status" value="1"/>
</dbReference>
<dbReference type="InterPro" id="IPR050152">
    <property type="entry name" value="ChlB/BchB/BchZ"/>
</dbReference>
<dbReference type="InterPro" id="IPR013580">
    <property type="entry name" value="LI-POR_suB-like_C"/>
</dbReference>
<dbReference type="InterPro" id="IPR000510">
    <property type="entry name" value="Nase/OxRdtase_comp1"/>
</dbReference>
<dbReference type="InterPro" id="IPR042298">
    <property type="entry name" value="P-CP_red_C"/>
</dbReference>
<dbReference type="InterPro" id="IPR005969">
    <property type="entry name" value="Protochl_reductB"/>
</dbReference>
<dbReference type="InterPro" id="IPR016209">
    <property type="entry name" value="Protochlorophyllide_Rdtase"/>
</dbReference>
<dbReference type="NCBIfam" id="TIGR01278">
    <property type="entry name" value="DPOR_BchB"/>
    <property type="match status" value="1"/>
</dbReference>
<dbReference type="PANTHER" id="PTHR33712">
    <property type="entry name" value="LIGHT-INDEPENDENT PROTOCHLOROPHYLLIDE REDUCTASE SUBUNIT B"/>
    <property type="match status" value="1"/>
</dbReference>
<dbReference type="PANTHER" id="PTHR33712:SF7">
    <property type="entry name" value="LIGHT-INDEPENDENT PROTOCHLOROPHYLLIDE REDUCTASE SUBUNIT B"/>
    <property type="match status" value="1"/>
</dbReference>
<dbReference type="Pfam" id="PF00148">
    <property type="entry name" value="Oxidored_nitro"/>
    <property type="match status" value="1"/>
</dbReference>
<dbReference type="Pfam" id="PF08369">
    <property type="entry name" value="PCP_red"/>
    <property type="match status" value="1"/>
</dbReference>
<dbReference type="PIRSF" id="PIRSF000163">
    <property type="entry name" value="PCP_ChlB"/>
    <property type="match status" value="1"/>
</dbReference>
<dbReference type="SUPFAM" id="SSF53807">
    <property type="entry name" value="Helical backbone' metal receptor"/>
    <property type="match status" value="1"/>
</dbReference>
<sequence>MKLAYWMYAGPAHIGTLRVASSFKNVHGIMHAPLGDDYFNVMRSMLERERNFTPVTASVVDRHVLARGSQEKVVDNITRKDEEENPDLIVLTPTCTSSILQEDLENFVERASLSTQGDVLLADVNHYRVNELQAADRTLDQIVQFYIQKARKNGDLLEEKTAKPSVNIIGVSTLGFHNQHDCTELKRLMADLGIEVNEVIPEGASVHNLKRLPQAWFNLIPYREIGHMSAHYLEKEFGMPFVDITPMGVVETARCIRKIQEVLNAQGADVNYEEYIENQTLHVSQAAWFSRSIDCQNLTGKKAVVYGDNTHAAAMTKILAREMGIHVVWAGTYCKYDQEWFRKEVSEYCDEVLINEDHGAIGDAIARVEPSAIFGTQMERHVGKRLNIPCGVIAAPIHIQDFPIGYKPFLGYEGTNQVADLVYNSFTLGMEDHLLEIFGGHDTKEVITKGISADSDLGWSADGQAELNKIPGFVRGKVKRNTEKFARERNITEITAEVLYAAKEAVGA</sequence>
<feature type="chain" id="PRO_1000079375" description="Light-independent protochlorophyllide reductase subunit B">
    <location>
        <begin position="1"/>
        <end position="508"/>
    </location>
</feature>
<feature type="active site" description="Proton donor" evidence="1">
    <location>
        <position position="294"/>
    </location>
</feature>
<feature type="binding site" evidence="1">
    <location>
        <position position="36"/>
    </location>
    <ligand>
        <name>[4Fe-4S] cluster</name>
        <dbReference type="ChEBI" id="CHEBI:49883"/>
        <note>ligand shared with heterodimeric partner</note>
    </ligand>
</feature>
<feature type="binding site" evidence="1">
    <location>
        <begin position="429"/>
        <end position="430"/>
    </location>
    <ligand>
        <name>substrate</name>
    </ligand>
</feature>
<accession>B0C929</accession>
<protein>
    <recommendedName>
        <fullName evidence="1">Light-independent protochlorophyllide reductase subunit B</fullName>
        <shortName evidence="1">DPOR subunit B</shortName>
        <shortName evidence="1">LI-POR subunit B</shortName>
        <ecNumber evidence="1">1.3.7.7</ecNumber>
    </recommendedName>
</protein>
<proteinExistence type="inferred from homology"/>
<comment type="function">
    <text evidence="1">Component of the dark-operative protochlorophyllide reductase (DPOR) that uses Mg-ATP and reduced ferredoxin to reduce ring D of protochlorophyllide (Pchlide) to form chlorophyllide a (Chlide). This reaction is light-independent. The NB-protein (ChlN-ChlB) is the catalytic component of the complex.</text>
</comment>
<comment type="catalytic activity">
    <reaction evidence="1">
        <text>chlorophyllide a + oxidized 2[4Fe-4S]-[ferredoxin] + 2 ADP + 2 phosphate = protochlorophyllide a + reduced 2[4Fe-4S]-[ferredoxin] + 2 ATP + 2 H2O</text>
        <dbReference type="Rhea" id="RHEA:28202"/>
        <dbReference type="Rhea" id="RHEA-COMP:10002"/>
        <dbReference type="Rhea" id="RHEA-COMP:10004"/>
        <dbReference type="ChEBI" id="CHEBI:15377"/>
        <dbReference type="ChEBI" id="CHEBI:30616"/>
        <dbReference type="ChEBI" id="CHEBI:33722"/>
        <dbReference type="ChEBI" id="CHEBI:33723"/>
        <dbReference type="ChEBI" id="CHEBI:43474"/>
        <dbReference type="ChEBI" id="CHEBI:83348"/>
        <dbReference type="ChEBI" id="CHEBI:83350"/>
        <dbReference type="ChEBI" id="CHEBI:456216"/>
        <dbReference type="EC" id="1.3.7.7"/>
    </reaction>
</comment>
<comment type="cofactor">
    <cofactor evidence="1">
        <name>[4Fe-4S] cluster</name>
        <dbReference type="ChEBI" id="CHEBI:49883"/>
    </cofactor>
    <text evidence="1">Binds 1 [4Fe-4S] cluster per heterodimer. The cluster is bound at the heterodimer interface by residues from both subunits.</text>
</comment>
<comment type="pathway">
    <text evidence="1">Porphyrin-containing compound metabolism; chlorophyll biosynthesis (light-independent).</text>
</comment>
<comment type="subunit">
    <text evidence="1">Protochlorophyllide reductase is composed of three subunits; ChlL, ChlN and ChlB. Forms a heterotetramer of two ChlB and two ChlN subunits.</text>
</comment>
<comment type="similarity">
    <text evidence="1">Belongs to the ChlB/BchB/BchZ family.</text>
</comment>
<evidence type="ECO:0000255" key="1">
    <source>
        <dbReference type="HAMAP-Rule" id="MF_00353"/>
    </source>
</evidence>
<reference key="1">
    <citation type="journal article" date="2008" name="Proc. Natl. Acad. Sci. U.S.A.">
        <title>Niche adaptation and genome expansion in the chlorophyll d-producing cyanobacterium Acaryochloris marina.</title>
        <authorList>
            <person name="Swingley W.D."/>
            <person name="Chen M."/>
            <person name="Cheung P.C."/>
            <person name="Conrad A.L."/>
            <person name="Dejesa L.C."/>
            <person name="Hao J."/>
            <person name="Honchak B.M."/>
            <person name="Karbach L.E."/>
            <person name="Kurdoglu A."/>
            <person name="Lahiri S."/>
            <person name="Mastrian S.D."/>
            <person name="Miyashita H."/>
            <person name="Page L."/>
            <person name="Ramakrishna P."/>
            <person name="Satoh S."/>
            <person name="Sattley W.M."/>
            <person name="Shimada Y."/>
            <person name="Taylor H.L."/>
            <person name="Tomo T."/>
            <person name="Tsuchiya T."/>
            <person name="Wang Z.T."/>
            <person name="Raymond J."/>
            <person name="Mimuro M."/>
            <person name="Blankenship R.E."/>
            <person name="Touchman J.W."/>
        </authorList>
    </citation>
    <scope>NUCLEOTIDE SEQUENCE [LARGE SCALE GENOMIC DNA]</scope>
    <source>
        <strain>MBIC 11017</strain>
    </source>
</reference>